<feature type="chain" id="PRO_0000063132" description="Purine nucleoside phosphorylase DeoD-type">
    <location>
        <begin position="1"/>
        <end position="239"/>
    </location>
</feature>
<feature type="active site" description="Proton donor" evidence="2">
    <location>
        <position position="205"/>
    </location>
</feature>
<feature type="binding site" evidence="1">
    <location>
        <position position="5"/>
    </location>
    <ligand>
        <name>a purine D-ribonucleoside</name>
        <dbReference type="ChEBI" id="CHEBI:142355"/>
        <note>ligand shared between dimeric partners</note>
    </ligand>
</feature>
<feature type="binding site" description="in other chain" evidence="1">
    <location>
        <position position="21"/>
    </location>
    <ligand>
        <name>phosphate</name>
        <dbReference type="ChEBI" id="CHEBI:43474"/>
        <note>ligand shared between dimeric partners</note>
    </ligand>
</feature>
<feature type="binding site" description="in other chain" evidence="1">
    <location>
        <position position="25"/>
    </location>
    <ligand>
        <name>phosphate</name>
        <dbReference type="ChEBI" id="CHEBI:43474"/>
        <note>ligand shared between dimeric partners</note>
    </ligand>
</feature>
<feature type="binding site" evidence="1">
    <location>
        <position position="44"/>
    </location>
    <ligand>
        <name>phosphate</name>
        <dbReference type="ChEBI" id="CHEBI:43474"/>
        <note>ligand shared between dimeric partners</note>
    </ligand>
</feature>
<feature type="binding site" description="in other chain" evidence="1">
    <location>
        <begin position="88"/>
        <end position="91"/>
    </location>
    <ligand>
        <name>phosphate</name>
        <dbReference type="ChEBI" id="CHEBI:43474"/>
        <note>ligand shared between dimeric partners</note>
    </ligand>
</feature>
<feature type="binding site" description="in other chain" evidence="1">
    <location>
        <begin position="180"/>
        <end position="182"/>
    </location>
    <ligand>
        <name>a purine D-ribonucleoside</name>
        <dbReference type="ChEBI" id="CHEBI:142355"/>
        <note>ligand shared between dimeric partners</note>
    </ligand>
</feature>
<feature type="binding site" description="in other chain" evidence="1">
    <location>
        <begin position="204"/>
        <end position="205"/>
    </location>
    <ligand>
        <name>a purine D-ribonucleoside</name>
        <dbReference type="ChEBI" id="CHEBI:142355"/>
        <note>ligand shared between dimeric partners</note>
    </ligand>
</feature>
<feature type="site" description="Important for catalytic activity" evidence="2">
    <location>
        <position position="218"/>
    </location>
</feature>
<feature type="modified residue" description="N6-acetyllysine" evidence="2">
    <location>
        <position position="27"/>
    </location>
</feature>
<dbReference type="EC" id="2.4.2.1" evidence="2"/>
<dbReference type="EMBL" id="AE014075">
    <property type="protein sequence ID" value="AAN83888.1"/>
    <property type="status" value="ALT_INIT"/>
    <property type="molecule type" value="Genomic_DNA"/>
</dbReference>
<dbReference type="RefSeq" id="WP_000224879.1">
    <property type="nucleotide sequence ID" value="NZ_CP051263.1"/>
</dbReference>
<dbReference type="SMR" id="Q8FA51"/>
<dbReference type="STRING" id="199310.c5468"/>
<dbReference type="KEGG" id="ecc:c5468"/>
<dbReference type="eggNOG" id="COG0813">
    <property type="taxonomic scope" value="Bacteria"/>
</dbReference>
<dbReference type="HOGENOM" id="CLU_068457_2_0_6"/>
<dbReference type="Proteomes" id="UP000001410">
    <property type="component" value="Chromosome"/>
</dbReference>
<dbReference type="GO" id="GO:0005829">
    <property type="term" value="C:cytosol"/>
    <property type="evidence" value="ECO:0007669"/>
    <property type="project" value="TreeGrafter"/>
</dbReference>
<dbReference type="GO" id="GO:0004731">
    <property type="term" value="F:purine-nucleoside phosphorylase activity"/>
    <property type="evidence" value="ECO:0007669"/>
    <property type="project" value="UniProtKB-UniRule"/>
</dbReference>
<dbReference type="GO" id="GO:0006152">
    <property type="term" value="P:purine nucleoside catabolic process"/>
    <property type="evidence" value="ECO:0007669"/>
    <property type="project" value="TreeGrafter"/>
</dbReference>
<dbReference type="CDD" id="cd09006">
    <property type="entry name" value="PNP_EcPNPI-like"/>
    <property type="match status" value="1"/>
</dbReference>
<dbReference type="FunFam" id="3.40.50.1580:FF:000002">
    <property type="entry name" value="Purine nucleoside phosphorylase DeoD-type"/>
    <property type="match status" value="1"/>
</dbReference>
<dbReference type="Gene3D" id="3.40.50.1580">
    <property type="entry name" value="Nucleoside phosphorylase domain"/>
    <property type="match status" value="1"/>
</dbReference>
<dbReference type="HAMAP" id="MF_01627">
    <property type="entry name" value="Pur_nucleosid_phosp"/>
    <property type="match status" value="1"/>
</dbReference>
<dbReference type="InterPro" id="IPR004402">
    <property type="entry name" value="DeoD-type"/>
</dbReference>
<dbReference type="InterPro" id="IPR018016">
    <property type="entry name" value="Nucleoside_phosphorylase_CS"/>
</dbReference>
<dbReference type="InterPro" id="IPR000845">
    <property type="entry name" value="Nucleoside_phosphorylase_d"/>
</dbReference>
<dbReference type="InterPro" id="IPR035994">
    <property type="entry name" value="Nucleoside_phosphorylase_sf"/>
</dbReference>
<dbReference type="NCBIfam" id="TIGR00107">
    <property type="entry name" value="deoD"/>
    <property type="match status" value="1"/>
</dbReference>
<dbReference type="NCBIfam" id="NF004489">
    <property type="entry name" value="PRK05819.1"/>
    <property type="match status" value="1"/>
</dbReference>
<dbReference type="NCBIfam" id="NF009914">
    <property type="entry name" value="PRK13374.1"/>
    <property type="match status" value="1"/>
</dbReference>
<dbReference type="PANTHER" id="PTHR43691:SF2">
    <property type="entry name" value="PURINE NUCLEOSIDE PHOSPHORYLASE DEOD-TYPE"/>
    <property type="match status" value="1"/>
</dbReference>
<dbReference type="PANTHER" id="PTHR43691">
    <property type="entry name" value="URIDINE PHOSPHORYLASE"/>
    <property type="match status" value="1"/>
</dbReference>
<dbReference type="Pfam" id="PF01048">
    <property type="entry name" value="PNP_UDP_1"/>
    <property type="match status" value="1"/>
</dbReference>
<dbReference type="SUPFAM" id="SSF53167">
    <property type="entry name" value="Purine and uridine phosphorylases"/>
    <property type="match status" value="1"/>
</dbReference>
<dbReference type="PROSITE" id="PS01232">
    <property type="entry name" value="PNP_UDP_1"/>
    <property type="match status" value="1"/>
</dbReference>
<gene>
    <name evidence="2" type="primary">deoD</name>
    <name type="ordered locus">c5468</name>
</gene>
<accession>Q8FA51</accession>
<reference key="1">
    <citation type="journal article" date="2002" name="Proc. Natl. Acad. Sci. U.S.A.">
        <title>Extensive mosaic structure revealed by the complete genome sequence of uropathogenic Escherichia coli.</title>
        <authorList>
            <person name="Welch R.A."/>
            <person name="Burland V."/>
            <person name="Plunkett G. III"/>
            <person name="Redford P."/>
            <person name="Roesch P."/>
            <person name="Rasko D."/>
            <person name="Buckles E.L."/>
            <person name="Liou S.-R."/>
            <person name="Boutin A."/>
            <person name="Hackett J."/>
            <person name="Stroud D."/>
            <person name="Mayhew G.F."/>
            <person name="Rose D.J."/>
            <person name="Zhou S."/>
            <person name="Schwartz D.C."/>
            <person name="Perna N.T."/>
            <person name="Mobley H.L.T."/>
            <person name="Donnenberg M.S."/>
            <person name="Blattner F.R."/>
        </authorList>
    </citation>
    <scope>NUCLEOTIDE SEQUENCE [LARGE SCALE GENOMIC DNA]</scope>
    <source>
        <strain>CFT073 / ATCC 700928 / UPEC</strain>
    </source>
</reference>
<sequence length="239" mass="25936">MATPHINAEMGDFADVVLMPGDPLRAKYIAETFLEDAREVNNVRGMLGFTGTYKGRKISVMGHGMGIPSCSIYTKELITDFGVKKIIRVGSCGAVLPHVKLRDVVIGMGACTDSKVNRIRFKDHDFAAIADFDMVRNAVDAAKALGVDARVGNLFSADLFYSPDGEMFDVMEKYGILGVEMEAAGIYGVAAEFGAKALTICTVSDHIRTHEQTTAAERQTTFNDMIKIALESVLLGDKE</sequence>
<name>DEOD_ECOL6</name>
<evidence type="ECO:0000250" key="1">
    <source>
        <dbReference type="UniProtKB" id="P50389"/>
    </source>
</evidence>
<evidence type="ECO:0000255" key="2">
    <source>
        <dbReference type="HAMAP-Rule" id="MF_01627"/>
    </source>
</evidence>
<evidence type="ECO:0000305" key="3"/>
<proteinExistence type="inferred from homology"/>
<protein>
    <recommendedName>
        <fullName evidence="2">Purine nucleoside phosphorylase DeoD-type</fullName>
        <shortName evidence="2">PNP</shortName>
        <ecNumber evidence="2">2.4.2.1</ecNumber>
    </recommendedName>
</protein>
<keyword id="KW-0007">Acetylation</keyword>
<keyword id="KW-0328">Glycosyltransferase</keyword>
<keyword id="KW-1185">Reference proteome</keyword>
<keyword id="KW-0808">Transferase</keyword>
<organism>
    <name type="scientific">Escherichia coli O6:H1 (strain CFT073 / ATCC 700928 / UPEC)</name>
    <dbReference type="NCBI Taxonomy" id="199310"/>
    <lineage>
        <taxon>Bacteria</taxon>
        <taxon>Pseudomonadati</taxon>
        <taxon>Pseudomonadota</taxon>
        <taxon>Gammaproteobacteria</taxon>
        <taxon>Enterobacterales</taxon>
        <taxon>Enterobacteriaceae</taxon>
        <taxon>Escherichia</taxon>
    </lineage>
</organism>
<comment type="function">
    <text evidence="2">Catalyzes the reversible phosphorolytic breakdown of the N-glycosidic bond in the beta-(deoxy)ribonucleoside molecules, with the formation of the corresponding free purine bases and pentose-1-phosphate.</text>
</comment>
<comment type="catalytic activity">
    <reaction evidence="2">
        <text>a purine D-ribonucleoside + phosphate = a purine nucleobase + alpha-D-ribose 1-phosphate</text>
        <dbReference type="Rhea" id="RHEA:19805"/>
        <dbReference type="ChEBI" id="CHEBI:26386"/>
        <dbReference type="ChEBI" id="CHEBI:43474"/>
        <dbReference type="ChEBI" id="CHEBI:57720"/>
        <dbReference type="ChEBI" id="CHEBI:142355"/>
        <dbReference type="EC" id="2.4.2.1"/>
    </reaction>
</comment>
<comment type="catalytic activity">
    <reaction evidence="2">
        <text>a purine 2'-deoxy-D-ribonucleoside + phosphate = a purine nucleobase + 2-deoxy-alpha-D-ribose 1-phosphate</text>
        <dbReference type="Rhea" id="RHEA:36431"/>
        <dbReference type="ChEBI" id="CHEBI:26386"/>
        <dbReference type="ChEBI" id="CHEBI:43474"/>
        <dbReference type="ChEBI" id="CHEBI:57259"/>
        <dbReference type="ChEBI" id="CHEBI:142361"/>
        <dbReference type="EC" id="2.4.2.1"/>
    </reaction>
</comment>
<comment type="subunit">
    <text evidence="2">Homohexamer; trimer of homodimers.</text>
</comment>
<comment type="similarity">
    <text evidence="2">Belongs to the PNP/UDP phosphorylase family.</text>
</comment>
<comment type="sequence caution" evidence="3">
    <conflict type="erroneous initiation">
        <sequence resource="EMBL-CDS" id="AAN83888"/>
    </conflict>
</comment>